<keyword id="KW-0687">Ribonucleoprotein</keyword>
<keyword id="KW-0689">Ribosomal protein</keyword>
<organism>
    <name type="scientific">Thermus aquaticus</name>
    <dbReference type="NCBI Taxonomy" id="271"/>
    <lineage>
        <taxon>Bacteria</taxon>
        <taxon>Thermotogati</taxon>
        <taxon>Deinococcota</taxon>
        <taxon>Deinococci</taxon>
        <taxon>Thermales</taxon>
        <taxon>Thermaceae</taxon>
        <taxon>Thermus</taxon>
    </lineage>
</organism>
<dbReference type="EMBL" id="U82109">
    <property type="protein sequence ID" value="AAB58503.1"/>
    <property type="molecule type" value="Genomic_DNA"/>
</dbReference>
<dbReference type="SMR" id="O07348"/>
<dbReference type="GO" id="GO:0005737">
    <property type="term" value="C:cytoplasm"/>
    <property type="evidence" value="ECO:0007669"/>
    <property type="project" value="UniProtKB-ARBA"/>
</dbReference>
<dbReference type="GO" id="GO:0015935">
    <property type="term" value="C:small ribosomal subunit"/>
    <property type="evidence" value="ECO:0007669"/>
    <property type="project" value="TreeGrafter"/>
</dbReference>
<dbReference type="GO" id="GO:0003735">
    <property type="term" value="F:structural constituent of ribosome"/>
    <property type="evidence" value="ECO:0007669"/>
    <property type="project" value="InterPro"/>
</dbReference>
<dbReference type="GO" id="GO:0006412">
    <property type="term" value="P:translation"/>
    <property type="evidence" value="ECO:0007669"/>
    <property type="project" value="UniProtKB-UniRule"/>
</dbReference>
<dbReference type="FunFam" id="3.30.1320.10:FF:000005">
    <property type="entry name" value="30S ribosomal protein S16"/>
    <property type="match status" value="1"/>
</dbReference>
<dbReference type="Gene3D" id="3.30.1320.10">
    <property type="match status" value="1"/>
</dbReference>
<dbReference type="HAMAP" id="MF_00385">
    <property type="entry name" value="Ribosomal_bS16"/>
    <property type="match status" value="1"/>
</dbReference>
<dbReference type="InterPro" id="IPR000307">
    <property type="entry name" value="Ribosomal_bS16"/>
</dbReference>
<dbReference type="InterPro" id="IPR023803">
    <property type="entry name" value="Ribosomal_bS16_dom_sf"/>
</dbReference>
<dbReference type="NCBIfam" id="TIGR00002">
    <property type="entry name" value="S16"/>
    <property type="match status" value="1"/>
</dbReference>
<dbReference type="PANTHER" id="PTHR12919">
    <property type="entry name" value="30S RIBOSOMAL PROTEIN S16"/>
    <property type="match status" value="1"/>
</dbReference>
<dbReference type="PANTHER" id="PTHR12919:SF20">
    <property type="entry name" value="SMALL RIBOSOMAL SUBUNIT PROTEIN BS16M"/>
    <property type="match status" value="1"/>
</dbReference>
<dbReference type="Pfam" id="PF00886">
    <property type="entry name" value="Ribosomal_S16"/>
    <property type="match status" value="1"/>
</dbReference>
<dbReference type="SUPFAM" id="SSF54565">
    <property type="entry name" value="Ribosomal protein S16"/>
    <property type="match status" value="1"/>
</dbReference>
<sequence>MVKISVSRFGSKHNPHYRIVVTDVRRKRDGAYIEKIGYYDPRKTTPDWLKVDVERARYWLSVGAQPTDTARRLLRQAGVFRQEAREGA</sequence>
<protein>
    <recommendedName>
        <fullName evidence="1">Small ribosomal subunit protein bS16</fullName>
    </recommendedName>
    <alternativeName>
        <fullName evidence="2">30S ribosomal protein S16</fullName>
    </alternativeName>
</protein>
<accession>O07348</accession>
<gene>
    <name evidence="1" type="primary">rpsP</name>
    <name evidence="1" type="synonym">rps16</name>
</gene>
<comment type="similarity">
    <text evidence="1">Belongs to the bacterial ribosomal protein bS16 family.</text>
</comment>
<reference key="1">
    <citation type="submission" date="1997-06" db="EMBL/GenBank/DDBJ databases">
        <authorList>
            <person name="Freymann D.M."/>
            <person name="Keenan R.J."/>
            <person name="Stroud R.M."/>
            <person name="Walter P."/>
        </authorList>
    </citation>
    <scope>NUCLEOTIDE SEQUENCE [GENOMIC DNA] OF 1-67</scope>
</reference>
<feature type="chain" id="PRO_0000167266" description="Small ribosomal subunit protein bS16">
    <location>
        <begin position="1"/>
        <end position="88"/>
    </location>
</feature>
<evidence type="ECO:0000255" key="1">
    <source>
        <dbReference type="HAMAP-Rule" id="MF_00385"/>
    </source>
</evidence>
<evidence type="ECO:0000305" key="2"/>
<name>RS16_THEAQ</name>
<proteinExistence type="inferred from homology"/>